<dbReference type="EMBL" id="CP000026">
    <property type="protein sequence ID" value="AAV79464.1"/>
    <property type="molecule type" value="Genomic_DNA"/>
</dbReference>
<dbReference type="RefSeq" id="WP_000595421.1">
    <property type="nucleotide sequence ID" value="NC_006511.1"/>
</dbReference>
<dbReference type="SMR" id="Q5PKT4"/>
<dbReference type="KEGG" id="spt:SPA3671"/>
<dbReference type="HOGENOM" id="CLU_077650_4_0_6"/>
<dbReference type="Proteomes" id="UP000008185">
    <property type="component" value="Chromosome"/>
</dbReference>
<dbReference type="GO" id="GO:0005737">
    <property type="term" value="C:cytoplasm"/>
    <property type="evidence" value="ECO:0007669"/>
    <property type="project" value="UniProtKB-SubCell"/>
</dbReference>
<dbReference type="GO" id="GO:0051259">
    <property type="term" value="P:protein complex oligomerization"/>
    <property type="evidence" value="ECO:0007669"/>
    <property type="project" value="InterPro"/>
</dbReference>
<dbReference type="GO" id="GO:0006457">
    <property type="term" value="P:protein folding"/>
    <property type="evidence" value="ECO:0007669"/>
    <property type="project" value="UniProtKB-UniRule"/>
</dbReference>
<dbReference type="Gene3D" id="1.20.120.1820">
    <property type="match status" value="1"/>
</dbReference>
<dbReference type="Gene3D" id="1.20.1280.20">
    <property type="entry name" value="HscB, C-terminal domain"/>
    <property type="match status" value="1"/>
</dbReference>
<dbReference type="HAMAP" id="MF_01150">
    <property type="entry name" value="TorD"/>
    <property type="match status" value="1"/>
</dbReference>
<dbReference type="InterPro" id="IPR023069">
    <property type="entry name" value="Chaperone_TorD"/>
</dbReference>
<dbReference type="InterPro" id="IPR020945">
    <property type="entry name" value="DMSO/NO3_reduct_chaperone"/>
</dbReference>
<dbReference type="InterPro" id="IPR036386">
    <property type="entry name" value="HscB_C_sf"/>
</dbReference>
<dbReference type="InterPro" id="IPR036411">
    <property type="entry name" value="TorD-like_sf"/>
</dbReference>
<dbReference type="InterPro" id="IPR050289">
    <property type="entry name" value="TorD/DmsD_chaperones"/>
</dbReference>
<dbReference type="NCBIfam" id="NF003442">
    <property type="entry name" value="PRK04976.1"/>
    <property type="match status" value="1"/>
</dbReference>
<dbReference type="PANTHER" id="PTHR34227:SF11">
    <property type="entry name" value="CHAPERONE PROTEIN TORD"/>
    <property type="match status" value="1"/>
</dbReference>
<dbReference type="PANTHER" id="PTHR34227">
    <property type="entry name" value="CHAPERONE PROTEIN YCDY"/>
    <property type="match status" value="1"/>
</dbReference>
<dbReference type="Pfam" id="PF02613">
    <property type="entry name" value="Nitrate_red_del"/>
    <property type="match status" value="1"/>
</dbReference>
<dbReference type="SUPFAM" id="SSF89155">
    <property type="entry name" value="TorD-like"/>
    <property type="match status" value="1"/>
</dbReference>
<name>TORD_SALPA</name>
<protein>
    <recommendedName>
        <fullName evidence="1">Chaperone protein TorD</fullName>
    </recommendedName>
</protein>
<keyword id="KW-0143">Chaperone</keyword>
<keyword id="KW-0963">Cytoplasm</keyword>
<sequence length="210" mass="23800">MIKQPALAQEQYACVYAWLALLFFREVDDEGLIQLQSAEIADWLALLKRQPALAASVALLEQKIAALSLRQDAQLELAADFCGLFLMTDKKSALPYASQYPQQEPGMIKHLLLEAGMEVNDDFKEPTDHLAIYLELLSHLHFSLGESFQQRRMNKLRQKTLSSLLEWLPEFTNNCLKHDPYGFYAALSQLLLAIVRFDDGKEDLSIVAAE</sequence>
<proteinExistence type="inferred from homology"/>
<gene>
    <name evidence="1" type="primary">torD</name>
    <name type="ordered locus">SPA3671</name>
</gene>
<organism>
    <name type="scientific">Salmonella paratyphi A (strain ATCC 9150 / SARB42)</name>
    <dbReference type="NCBI Taxonomy" id="295319"/>
    <lineage>
        <taxon>Bacteria</taxon>
        <taxon>Pseudomonadati</taxon>
        <taxon>Pseudomonadota</taxon>
        <taxon>Gammaproteobacteria</taxon>
        <taxon>Enterobacterales</taxon>
        <taxon>Enterobacteriaceae</taxon>
        <taxon>Salmonella</taxon>
    </lineage>
</organism>
<feature type="chain" id="PRO_0000211639" description="Chaperone protein TorD">
    <location>
        <begin position="1"/>
        <end position="210"/>
    </location>
</feature>
<evidence type="ECO:0000255" key="1">
    <source>
        <dbReference type="HAMAP-Rule" id="MF_01150"/>
    </source>
</evidence>
<accession>Q5PKT4</accession>
<reference key="1">
    <citation type="journal article" date="2004" name="Nat. Genet.">
        <title>Comparison of genome degradation in Paratyphi A and Typhi, human-restricted serovars of Salmonella enterica that cause typhoid.</title>
        <authorList>
            <person name="McClelland M."/>
            <person name="Sanderson K.E."/>
            <person name="Clifton S.W."/>
            <person name="Latreille P."/>
            <person name="Porwollik S."/>
            <person name="Sabo A."/>
            <person name="Meyer R."/>
            <person name="Bieri T."/>
            <person name="Ozersky P."/>
            <person name="McLellan M."/>
            <person name="Harkins C.R."/>
            <person name="Wang C."/>
            <person name="Nguyen C."/>
            <person name="Berghoff A."/>
            <person name="Elliott G."/>
            <person name="Kohlberg S."/>
            <person name="Strong C."/>
            <person name="Du F."/>
            <person name="Carter J."/>
            <person name="Kremizki C."/>
            <person name="Layman D."/>
            <person name="Leonard S."/>
            <person name="Sun H."/>
            <person name="Fulton L."/>
            <person name="Nash W."/>
            <person name="Miner T."/>
            <person name="Minx P."/>
            <person name="Delehaunty K."/>
            <person name="Fronick C."/>
            <person name="Magrini V."/>
            <person name="Nhan M."/>
            <person name="Warren W."/>
            <person name="Florea L."/>
            <person name="Spieth J."/>
            <person name="Wilson R.K."/>
        </authorList>
    </citation>
    <scope>NUCLEOTIDE SEQUENCE [LARGE SCALE GENOMIC DNA]</scope>
    <source>
        <strain>ATCC 9150 / SARB42</strain>
    </source>
</reference>
<comment type="function">
    <text evidence="1">Involved in the biogenesis of TorA. Acts on TorA before the insertion of the molybdenum cofactor and, as a result, probably favors a conformation of the apoenzyme that is competent for acquiring the cofactor.</text>
</comment>
<comment type="subcellular location">
    <subcellularLocation>
        <location evidence="1">Cytoplasm</location>
    </subcellularLocation>
</comment>
<comment type="similarity">
    <text evidence="1">Belongs to the TorD/DmsD family. TorD subfamily.</text>
</comment>